<name>3S1B_LATCR</name>
<reference key="1">
    <citation type="journal article" date="1983" name="Toxicon 21 Suppl.">
        <title>Neurotoxins of sea snakes genus Laticauda.</title>
        <authorList>
            <person name="Tamiya N."/>
            <person name="Sato A."/>
            <person name="Kim H.S."/>
            <person name="Teruuchi T."/>
            <person name="Takasaki C."/>
            <person name="Ishikawa Y."/>
            <person name="Guinea M.L."/>
            <person name="McCoy M."/>
            <person name="Heatwole H."/>
            <person name="Cogger H.G."/>
        </authorList>
    </citation>
    <scope>PROTEIN SEQUENCE</scope>
    <scope>SUBCELLULAR LOCATION</scope>
    <source>
        <tissue>Venom</tissue>
    </source>
</reference>
<comment type="function">
    <text evidence="2">Binds to muscle nicotinic acetylcholine receptor (nAChR) and inhibit acetylcholine from binding to the receptor, thereby impairing neuromuscular transmission.</text>
</comment>
<comment type="subcellular location">
    <subcellularLocation>
        <location evidence="4">Secreted</location>
    </subcellularLocation>
</comment>
<comment type="tissue specificity">
    <text evidence="5">Expressed by the venom gland.</text>
</comment>
<comment type="similarity">
    <text evidence="5">Belongs to the three-finger toxin family. Short-chain subfamily. Type I alpha-neurotoxin sub-subfamily.</text>
</comment>
<accession>P25496</accession>
<sequence>RRCFNHPSSQPQTNKSCPPGENSCYNKQWRDHRGTIIERGCGCPQVKSGIKLRCCQSDDCNN</sequence>
<dbReference type="SMR" id="P25496"/>
<dbReference type="GO" id="GO:0005576">
    <property type="term" value="C:extracellular region"/>
    <property type="evidence" value="ECO:0007669"/>
    <property type="project" value="UniProtKB-SubCell"/>
</dbReference>
<dbReference type="GO" id="GO:0030550">
    <property type="term" value="F:acetylcholine receptor inhibitor activity"/>
    <property type="evidence" value="ECO:0007669"/>
    <property type="project" value="UniProtKB-KW"/>
</dbReference>
<dbReference type="GO" id="GO:0099106">
    <property type="term" value="F:ion channel regulator activity"/>
    <property type="evidence" value="ECO:0007669"/>
    <property type="project" value="UniProtKB-KW"/>
</dbReference>
<dbReference type="GO" id="GO:0090729">
    <property type="term" value="F:toxin activity"/>
    <property type="evidence" value="ECO:0007669"/>
    <property type="project" value="UniProtKB-KW"/>
</dbReference>
<dbReference type="CDD" id="cd00206">
    <property type="entry name" value="TFP_snake_toxin"/>
    <property type="match status" value="1"/>
</dbReference>
<dbReference type="FunFam" id="2.10.60.10:FF:000024">
    <property type="entry name" value="Cytotoxin 1"/>
    <property type="match status" value="1"/>
</dbReference>
<dbReference type="Gene3D" id="2.10.60.10">
    <property type="entry name" value="CD59"/>
    <property type="match status" value="1"/>
</dbReference>
<dbReference type="InterPro" id="IPR003571">
    <property type="entry name" value="Snake_3FTx"/>
</dbReference>
<dbReference type="InterPro" id="IPR045860">
    <property type="entry name" value="Snake_toxin-like_sf"/>
</dbReference>
<dbReference type="InterPro" id="IPR018354">
    <property type="entry name" value="Snake_toxin_con_site"/>
</dbReference>
<dbReference type="InterPro" id="IPR054131">
    <property type="entry name" value="Toxin_cobra-type"/>
</dbReference>
<dbReference type="Pfam" id="PF21947">
    <property type="entry name" value="Toxin_cobra-type"/>
    <property type="match status" value="1"/>
</dbReference>
<dbReference type="SUPFAM" id="SSF57302">
    <property type="entry name" value="Snake toxin-like"/>
    <property type="match status" value="1"/>
</dbReference>
<dbReference type="PROSITE" id="PS00272">
    <property type="entry name" value="SNAKE_TOXIN"/>
    <property type="match status" value="1"/>
</dbReference>
<protein>
    <recommendedName>
        <fullName>Short neurotoxin B</fullName>
    </recommendedName>
</protein>
<organism>
    <name type="scientific">Laticauda crockeri</name>
    <name type="common">Crocker's sea snake</name>
    <name type="synonym">Rennell Island sea krait</name>
    <dbReference type="NCBI Taxonomy" id="8629"/>
    <lineage>
        <taxon>Eukaryota</taxon>
        <taxon>Metazoa</taxon>
        <taxon>Chordata</taxon>
        <taxon>Craniata</taxon>
        <taxon>Vertebrata</taxon>
        <taxon>Euteleostomi</taxon>
        <taxon>Lepidosauria</taxon>
        <taxon>Squamata</taxon>
        <taxon>Bifurcata</taxon>
        <taxon>Unidentata</taxon>
        <taxon>Episquamata</taxon>
        <taxon>Toxicofera</taxon>
        <taxon>Serpentes</taxon>
        <taxon>Colubroidea</taxon>
        <taxon>Elapidae</taxon>
        <taxon>Laticaudinae</taxon>
        <taxon>Laticauda</taxon>
    </lineage>
</organism>
<feature type="chain" id="PRO_0000093588" description="Short neurotoxin B" evidence="4">
    <location>
        <begin position="1"/>
        <end position="62"/>
    </location>
</feature>
<feature type="region of interest" description="Disordered" evidence="3">
    <location>
        <begin position="1"/>
        <end position="21"/>
    </location>
</feature>
<feature type="compositionally biased region" description="Polar residues" evidence="3">
    <location>
        <begin position="1"/>
        <end position="16"/>
    </location>
</feature>
<feature type="disulfide bond" evidence="1">
    <location>
        <begin position="3"/>
        <end position="24"/>
    </location>
</feature>
<feature type="disulfide bond" evidence="1">
    <location>
        <begin position="17"/>
        <end position="41"/>
    </location>
</feature>
<feature type="disulfide bond" evidence="1">
    <location>
        <begin position="43"/>
        <end position="54"/>
    </location>
</feature>
<feature type="disulfide bond" evidence="1">
    <location>
        <begin position="55"/>
        <end position="60"/>
    </location>
</feature>
<evidence type="ECO:0000250" key="1">
    <source>
        <dbReference type="UniProtKB" id="P0C1Z0"/>
    </source>
</evidence>
<evidence type="ECO:0000250" key="2">
    <source>
        <dbReference type="UniProtKB" id="P60775"/>
    </source>
</evidence>
<evidence type="ECO:0000256" key="3">
    <source>
        <dbReference type="SAM" id="MobiDB-lite"/>
    </source>
</evidence>
<evidence type="ECO:0000269" key="4">
    <source ref="1"/>
</evidence>
<evidence type="ECO:0000305" key="5"/>
<keyword id="KW-0008">Acetylcholine receptor inhibiting toxin</keyword>
<keyword id="KW-0903">Direct protein sequencing</keyword>
<keyword id="KW-1015">Disulfide bond</keyword>
<keyword id="KW-0872">Ion channel impairing toxin</keyword>
<keyword id="KW-0528">Neurotoxin</keyword>
<keyword id="KW-0629">Postsynaptic neurotoxin</keyword>
<keyword id="KW-0964">Secreted</keyword>
<keyword id="KW-0800">Toxin</keyword>
<proteinExistence type="evidence at protein level"/>